<proteinExistence type="evidence at transcript level"/>
<dbReference type="EMBL" id="BT020769">
    <property type="protein sequence ID" value="AAX08786.1"/>
    <property type="molecule type" value="mRNA"/>
</dbReference>
<dbReference type="EMBL" id="BC123771">
    <property type="protein sequence ID" value="AAI23772.1"/>
    <property type="molecule type" value="mRNA"/>
</dbReference>
<dbReference type="RefSeq" id="NP_001069138.1">
    <property type="nucleotide sequence ID" value="NM_001075670.2"/>
</dbReference>
<dbReference type="SMR" id="Q5EA00"/>
<dbReference type="FunCoup" id="Q5EA00">
    <property type="interactions" value="2258"/>
</dbReference>
<dbReference type="STRING" id="9913.ENSBTAP00000029227"/>
<dbReference type="PaxDb" id="9913-ENSBTAP00000029227"/>
<dbReference type="Ensembl" id="ENSBTAT00000029227.6">
    <property type="protein sequence ID" value="ENSBTAP00000029227.5"/>
    <property type="gene ID" value="ENSBTAG00000021922.7"/>
</dbReference>
<dbReference type="GeneID" id="514465"/>
<dbReference type="KEGG" id="bta:514465"/>
<dbReference type="CTD" id="64744"/>
<dbReference type="VEuPathDB" id="HostDB:ENSBTAG00000021922"/>
<dbReference type="VGNC" id="VGNC:34984">
    <property type="gene designation" value="SMAP2"/>
</dbReference>
<dbReference type="eggNOG" id="KOG0703">
    <property type="taxonomic scope" value="Eukaryota"/>
</dbReference>
<dbReference type="GeneTree" id="ENSGT00940000158387"/>
<dbReference type="HOGENOM" id="CLU_023062_5_0_1"/>
<dbReference type="InParanoid" id="Q5EA00"/>
<dbReference type="OMA" id="MMGYGQS"/>
<dbReference type="OrthoDB" id="10266696at2759"/>
<dbReference type="TreeFam" id="TF313876"/>
<dbReference type="Proteomes" id="UP000009136">
    <property type="component" value="Chromosome 3"/>
</dbReference>
<dbReference type="Bgee" id="ENSBTAG00000021922">
    <property type="expression patterns" value="Expressed in nasopharynx and 104 other cell types or tissues"/>
</dbReference>
<dbReference type="GO" id="GO:0005737">
    <property type="term" value="C:cytoplasm"/>
    <property type="evidence" value="ECO:0000318"/>
    <property type="project" value="GO_Central"/>
</dbReference>
<dbReference type="GO" id="GO:0005096">
    <property type="term" value="F:GTPase activator activity"/>
    <property type="evidence" value="ECO:0000318"/>
    <property type="project" value="GO_Central"/>
</dbReference>
<dbReference type="GO" id="GO:0008270">
    <property type="term" value="F:zinc ion binding"/>
    <property type="evidence" value="ECO:0007669"/>
    <property type="project" value="UniProtKB-KW"/>
</dbReference>
<dbReference type="CDD" id="cd08859">
    <property type="entry name" value="ArfGap_SMAP2"/>
    <property type="match status" value="1"/>
</dbReference>
<dbReference type="FunFam" id="1.10.220.150:FF:000009">
    <property type="entry name" value="stromal membrane-associated protein 1 isoform X1"/>
    <property type="match status" value="1"/>
</dbReference>
<dbReference type="Gene3D" id="1.10.220.150">
    <property type="entry name" value="Arf GTPase activating protein"/>
    <property type="match status" value="1"/>
</dbReference>
<dbReference type="InterPro" id="IPR051718">
    <property type="entry name" value="ARF_GTPase-activating"/>
</dbReference>
<dbReference type="InterPro" id="IPR037278">
    <property type="entry name" value="ARFGAP/RecO"/>
</dbReference>
<dbReference type="InterPro" id="IPR001164">
    <property type="entry name" value="ArfGAP_dom"/>
</dbReference>
<dbReference type="InterPro" id="IPR038508">
    <property type="entry name" value="ArfGAP_dom_sf"/>
</dbReference>
<dbReference type="PANTHER" id="PTHR45705">
    <property type="entry name" value="FI20236P1"/>
    <property type="match status" value="1"/>
</dbReference>
<dbReference type="PANTHER" id="PTHR45705:SF4">
    <property type="entry name" value="STROMAL MEMBRANE-ASSOCIATED PROTEIN 2"/>
    <property type="match status" value="1"/>
</dbReference>
<dbReference type="Pfam" id="PF01412">
    <property type="entry name" value="ArfGap"/>
    <property type="match status" value="1"/>
</dbReference>
<dbReference type="PRINTS" id="PR00405">
    <property type="entry name" value="REVINTRACTNG"/>
</dbReference>
<dbReference type="SMART" id="SM00105">
    <property type="entry name" value="ArfGap"/>
    <property type="match status" value="1"/>
</dbReference>
<dbReference type="SUPFAM" id="SSF57863">
    <property type="entry name" value="ArfGap/RecO-like zinc finger"/>
    <property type="match status" value="1"/>
</dbReference>
<dbReference type="PROSITE" id="PS50115">
    <property type="entry name" value="ARFGAP"/>
    <property type="match status" value="1"/>
</dbReference>
<sequence>MTGKSVKDVDRYQAVLANLLLEEDNKFCADCQSKGPRWASWNIGVFICIRCAGIHRNLGVHISRVKSVNLDQWTQEQIQCMQEMGNGKANRLYEAYLPETFRRPQIDHAVEGFIRDKYEKKKYMDRSLDINAFRKEKDNKWKRGSEPAPEKKMEPVVFEKVKMPQKKEDPQLPRKTSPKSKAPVVDLLGLDAPVSCSIANGKTSNTLEKDLDLLASVSSPSSSVSRKVVGSMPTPGSAGSVPENLNLFPEPGSKSEETSKKQLSKDSILSLYGSQTPQMPTQAMFMAPAQMAYPTAYPSFPGVTPPNSLMGSMMPPPVGMVAQPGASGMVAPMAMPAGYMGGMQASMMGVPNGMMTTQQASYMAGMAAMPQTMYGVQPAQQLQWNLTQMTQQMAGMNFCGTNGMLSYGQSMNGGNGQAANQTLSPQMWK</sequence>
<feature type="chain" id="PRO_0000235840" description="Stromal membrane-associated protein 2">
    <location>
        <begin position="1"/>
        <end position="429"/>
    </location>
</feature>
<feature type="domain" description="Arf-GAP" evidence="3">
    <location>
        <begin position="13"/>
        <end position="137"/>
    </location>
</feature>
<feature type="zinc finger region" description="C4-type" evidence="3">
    <location>
        <begin position="28"/>
        <end position="51"/>
    </location>
</feature>
<feature type="region of interest" description="Disordered" evidence="4">
    <location>
        <begin position="138"/>
        <end position="181"/>
    </location>
</feature>
<feature type="region of interest" description="Interaction with clathrin heavy chains" evidence="1">
    <location>
        <begin position="163"/>
        <end position="232"/>
    </location>
</feature>
<feature type="region of interest" description="Disordered" evidence="4">
    <location>
        <begin position="217"/>
        <end position="263"/>
    </location>
</feature>
<feature type="region of interest" description="Interaction with PICALM" evidence="1">
    <location>
        <begin position="340"/>
        <end position="429"/>
    </location>
</feature>
<feature type="compositionally biased region" description="Basic and acidic residues" evidence="4">
    <location>
        <begin position="138"/>
        <end position="172"/>
    </location>
</feature>
<feature type="compositionally biased region" description="Low complexity" evidence="4">
    <location>
        <begin position="217"/>
        <end position="231"/>
    </location>
</feature>
<feature type="compositionally biased region" description="Basic and acidic residues" evidence="4">
    <location>
        <begin position="253"/>
        <end position="263"/>
    </location>
</feature>
<feature type="modified residue" description="Phosphoserine" evidence="2">
    <location>
        <position position="127"/>
    </location>
</feature>
<feature type="modified residue" description="Phosphoserine" evidence="2">
    <location>
        <position position="219"/>
    </location>
</feature>
<feature type="modified residue" description="Phosphoserine" evidence="2">
    <location>
        <position position="223"/>
    </location>
</feature>
<feature type="modified residue" description="Phosphoserine" evidence="2">
    <location>
        <position position="225"/>
    </location>
</feature>
<feature type="modified residue" description="Phosphoserine" evidence="2">
    <location>
        <position position="231"/>
    </location>
</feature>
<feature type="modified residue" description="Phosphoserine" evidence="2">
    <location>
        <position position="240"/>
    </location>
</feature>
<gene>
    <name type="primary">SMAP2</name>
    <name type="synonym">SMAP1L</name>
</gene>
<accession>Q5EA00</accession>
<accession>Q08DF8</accession>
<evidence type="ECO:0000250" key="1"/>
<evidence type="ECO:0000250" key="2">
    <source>
        <dbReference type="UniProtKB" id="Q8WU79"/>
    </source>
</evidence>
<evidence type="ECO:0000255" key="3">
    <source>
        <dbReference type="PROSITE-ProRule" id="PRU00288"/>
    </source>
</evidence>
<evidence type="ECO:0000256" key="4">
    <source>
        <dbReference type="SAM" id="MobiDB-lite"/>
    </source>
</evidence>
<comment type="function">
    <text evidence="1">GTPase activating protein that acts on ARF1. Can also activate ARF6 (in vitro). May play a role in clathrin-dependent retrograde transport from early endosomes to the trans-Golgi network (By similarity).</text>
</comment>
<comment type="subunit">
    <text evidence="1">Interacts with ARF1. Interacts with PICALM and clathrin heavy chains (By similarity).</text>
</comment>
<comment type="subcellular location">
    <subcellularLocation>
        <location>Cytoplasm</location>
    </subcellularLocation>
    <text evidence="1">Detected in multiple foci throughout the cytoplasm and in juxtanuclear structures.</text>
</comment>
<keyword id="KW-0963">Cytoplasm</keyword>
<keyword id="KW-0343">GTPase activation</keyword>
<keyword id="KW-0479">Metal-binding</keyword>
<keyword id="KW-0597">Phosphoprotein</keyword>
<keyword id="KW-1185">Reference proteome</keyword>
<keyword id="KW-0862">Zinc</keyword>
<keyword id="KW-0863">Zinc-finger</keyword>
<organism>
    <name type="scientific">Bos taurus</name>
    <name type="common">Bovine</name>
    <dbReference type="NCBI Taxonomy" id="9913"/>
    <lineage>
        <taxon>Eukaryota</taxon>
        <taxon>Metazoa</taxon>
        <taxon>Chordata</taxon>
        <taxon>Craniata</taxon>
        <taxon>Vertebrata</taxon>
        <taxon>Euteleostomi</taxon>
        <taxon>Mammalia</taxon>
        <taxon>Eutheria</taxon>
        <taxon>Laurasiatheria</taxon>
        <taxon>Artiodactyla</taxon>
        <taxon>Ruminantia</taxon>
        <taxon>Pecora</taxon>
        <taxon>Bovidae</taxon>
        <taxon>Bovinae</taxon>
        <taxon>Bos</taxon>
    </lineage>
</organism>
<reference key="1">
    <citation type="journal article" date="2005" name="BMC Genomics">
        <title>Characterization of 954 bovine full-CDS cDNA sequences.</title>
        <authorList>
            <person name="Harhay G.P."/>
            <person name="Sonstegard T.S."/>
            <person name="Keele J.W."/>
            <person name="Heaton M.P."/>
            <person name="Clawson M.L."/>
            <person name="Snelling W.M."/>
            <person name="Wiedmann R.T."/>
            <person name="Van Tassell C.P."/>
            <person name="Smith T.P.L."/>
        </authorList>
    </citation>
    <scope>NUCLEOTIDE SEQUENCE [LARGE SCALE MRNA]</scope>
</reference>
<reference key="2">
    <citation type="submission" date="2006-09" db="EMBL/GenBank/DDBJ databases">
        <authorList>
            <consortium name="NIH - Mammalian Gene Collection (MGC) project"/>
        </authorList>
    </citation>
    <scope>NUCLEOTIDE SEQUENCE [LARGE SCALE MRNA]</scope>
    <source>
        <strain>Hereford</strain>
        <tissue>Fetal muscle</tissue>
    </source>
</reference>
<protein>
    <recommendedName>
        <fullName>Stromal membrane-associated protein 2</fullName>
    </recommendedName>
    <alternativeName>
        <fullName>Stromal membrane-associated protein 1-like</fullName>
    </alternativeName>
</protein>
<name>SMAP2_BOVIN</name>